<protein>
    <recommendedName>
        <fullName evidence="9">Chitin deacetylase 2</fullName>
        <ecNumber evidence="1">3.5.1.41</ecNumber>
    </recommendedName>
</protein>
<accession>Q55U20</accession>
<accession>Q96W71</accession>
<proteinExistence type="evidence at protein level"/>
<comment type="function">
    <text evidence="1">Hydrolyzes the N-acetamido groups of N-acetyl-D-glucosamine residues in chitin to form chitosan and acetate (By similarity). Chitosan is required to anchor melanin to the cell wall, for maintenance of cell wall integrity, and for cytokinesis (By similarity).</text>
</comment>
<comment type="catalytic activity">
    <reaction evidence="1">
        <text>[(1-&gt;4)-N-acetyl-beta-D-glucosaminyl](n) + n H2O = chitosan + n acetate</text>
        <dbReference type="Rhea" id="RHEA:10464"/>
        <dbReference type="Rhea" id="RHEA-COMP:9593"/>
        <dbReference type="Rhea" id="RHEA-COMP:9597"/>
        <dbReference type="ChEBI" id="CHEBI:15377"/>
        <dbReference type="ChEBI" id="CHEBI:17029"/>
        <dbReference type="ChEBI" id="CHEBI:30089"/>
        <dbReference type="ChEBI" id="CHEBI:57704"/>
        <dbReference type="EC" id="3.5.1.41"/>
    </reaction>
    <physiologicalReaction direction="left-to-right" evidence="1">
        <dbReference type="Rhea" id="RHEA:10465"/>
    </physiologicalReaction>
</comment>
<comment type="cofactor">
    <cofactor evidence="2">
        <name>Co(2+)</name>
        <dbReference type="ChEBI" id="CHEBI:48828"/>
    </cofactor>
</comment>
<comment type="subcellular location">
    <subcellularLocation>
        <location evidence="7">Secreted</location>
    </subcellularLocation>
    <subcellularLocation>
        <location evidence="1">Secreted</location>
        <location evidence="1">Cell wall</location>
    </subcellularLocation>
    <subcellularLocation>
        <location evidence="1">Cell membrane</location>
        <topology evidence="3">Lipid-anchor</topology>
        <topology evidence="3">GPI-anchor</topology>
    </subcellularLocation>
    <text evidence="1">GPI-anchored cell membrane protein (GPI-PMP) (By similarity). Non-covalently associated to the cell wall by means independent of both its GPI-anchor and beta-1,6-glucan (By similarity). Cell membrane localization is critical for effective deacetylase activity (By similarity).</text>
</comment>
<comment type="PTM">
    <text evidence="7">Glycosylated.</text>
</comment>
<comment type="biotechnology">
    <text evidence="7">Potential vaccine candidate; elicits T-cell activation when injected in mice.</text>
</comment>
<comment type="similarity">
    <text evidence="9">Belongs to the polysaccharide deacetylase family.</text>
</comment>
<evidence type="ECO:0000250" key="1">
    <source>
        <dbReference type="UniProtKB" id="J9VND2"/>
    </source>
</evidence>
<evidence type="ECO:0000250" key="2">
    <source>
        <dbReference type="UniProtKB" id="Q6DWK3"/>
    </source>
</evidence>
<evidence type="ECO:0000255" key="3"/>
<evidence type="ECO:0000255" key="4">
    <source>
        <dbReference type="PROSITE-ProRule" id="PRU00498"/>
    </source>
</evidence>
<evidence type="ECO:0000255" key="5">
    <source>
        <dbReference type="PROSITE-ProRule" id="PRU01014"/>
    </source>
</evidence>
<evidence type="ECO:0000256" key="6">
    <source>
        <dbReference type="SAM" id="MobiDB-lite"/>
    </source>
</evidence>
<evidence type="ECO:0000269" key="7">
    <source>
    </source>
</evidence>
<evidence type="ECO:0000303" key="8">
    <source>
    </source>
</evidence>
<evidence type="ECO:0000305" key="9"/>
<evidence type="ECO:0000312" key="10">
    <source>
        <dbReference type="EMBL" id="AAK50770.1"/>
    </source>
</evidence>
<evidence type="ECO:0000312" key="11">
    <source>
        <dbReference type="EMBL" id="EAL21229.1"/>
    </source>
</evidence>
<organism>
    <name type="scientific">Cryptococcus neoformans var. neoformans serotype D (strain B-3501A)</name>
    <name type="common">Filobasidiella neoformans</name>
    <dbReference type="NCBI Taxonomy" id="283643"/>
    <lineage>
        <taxon>Eukaryota</taxon>
        <taxon>Fungi</taxon>
        <taxon>Dikarya</taxon>
        <taxon>Basidiomycota</taxon>
        <taxon>Agaricomycotina</taxon>
        <taxon>Tremellomycetes</taxon>
        <taxon>Tremellales</taxon>
        <taxon>Cryptococcaceae</taxon>
        <taxon>Cryptococcus</taxon>
        <taxon>Cryptococcus neoformans species complex</taxon>
    </lineage>
</organism>
<name>CDA2_CRYNB</name>
<gene>
    <name evidence="1" type="primary">CDA2</name>
    <name evidence="8" type="synonym">MP98</name>
    <name evidence="11" type="ordered locus">CNBD2840</name>
</gene>
<feature type="signal peptide" evidence="7">
    <location>
        <begin position="1"/>
        <end position="51"/>
    </location>
</feature>
<feature type="chain" id="PRO_5004250730" description="Chitin deacetylase 2" evidence="3">
    <location>
        <begin position="52"/>
        <end position="427"/>
    </location>
</feature>
<feature type="propeptide" id="PRO_0000451811" description="Removed in mature form" evidence="3">
    <location>
        <begin position="428"/>
        <end position="458"/>
    </location>
</feature>
<feature type="domain" description="NodB homology" evidence="5">
    <location>
        <begin position="158"/>
        <end position="348"/>
    </location>
</feature>
<feature type="region of interest" description="Disordered" evidence="6">
    <location>
        <begin position="382"/>
        <end position="430"/>
    </location>
</feature>
<feature type="active site" description="Proton acceptor" evidence="2">
    <location>
        <position position="165"/>
    </location>
</feature>
<feature type="active site" description="Proton donor" evidence="2">
    <location>
        <position position="322"/>
    </location>
</feature>
<feature type="binding site" evidence="2">
    <location>
        <position position="165"/>
    </location>
    <ligand>
        <name>acetate</name>
        <dbReference type="ChEBI" id="CHEBI:30089"/>
    </ligand>
</feature>
<feature type="binding site" evidence="2">
    <location>
        <position position="166"/>
    </location>
    <ligand>
        <name>Co(2+)</name>
        <dbReference type="ChEBI" id="CHEBI:48828"/>
    </ligand>
</feature>
<feature type="binding site" evidence="2">
    <location>
        <position position="215"/>
    </location>
    <ligand>
        <name>Co(2+)</name>
        <dbReference type="ChEBI" id="CHEBI:48828"/>
    </ligand>
</feature>
<feature type="binding site" evidence="2">
    <location>
        <position position="219"/>
    </location>
    <ligand>
        <name>Co(2+)</name>
        <dbReference type="ChEBI" id="CHEBI:48828"/>
    </ligand>
</feature>
<feature type="binding site" evidence="2">
    <location>
        <position position="256"/>
    </location>
    <ligand>
        <name>acetate</name>
        <dbReference type="ChEBI" id="CHEBI:30089"/>
    </ligand>
</feature>
<feature type="lipid moiety-binding region" description="GPI-anchor amidated serine" evidence="3">
    <location>
        <position position="427"/>
    </location>
</feature>
<feature type="glycosylation site" description="N-linked (GlcNAc...) asparagine" evidence="4">
    <location>
        <position position="87"/>
    </location>
</feature>
<feature type="glycosylation site" description="N-linked (GlcNAc...) asparagine" evidence="4">
    <location>
        <position position="99"/>
    </location>
</feature>
<feature type="glycosylation site" description="N-linked (GlcNAc...) asparagine" evidence="4">
    <location>
        <position position="125"/>
    </location>
</feature>
<feature type="glycosylation site" description="N-linked (GlcNAc...) asparagine" evidence="4">
    <location>
        <position position="169"/>
    </location>
</feature>
<feature type="glycosylation site" description="N-linked (GlcNAc...) asparagine" evidence="4">
    <location>
        <position position="271"/>
    </location>
</feature>
<feature type="glycosylation site" description="N-linked (GlcNAc...) asparagine" evidence="4">
    <location>
        <position position="309"/>
    </location>
</feature>
<feature type="glycosylation site" description="N-linked (GlcNAc...) asparagine" evidence="4">
    <location>
        <position position="326"/>
    </location>
</feature>
<feature type="glycosylation site" description="N-linked (GlcNAc...) asparagine" evidence="4">
    <location>
        <position position="354"/>
    </location>
</feature>
<feature type="glycosylation site" description="N-linked (GlcNAc...) asparagine" evidence="4">
    <location>
        <position position="363"/>
    </location>
</feature>
<feature type="glycosylation site" description="N-linked (GlcNAc...) asparagine" evidence="4">
    <location>
        <position position="378"/>
    </location>
</feature>
<feature type="glycosylation site" description="N-linked (GlcNAc...) asparagine" evidence="4">
    <location>
        <position position="393"/>
    </location>
</feature>
<feature type="glycosylation site" description="N-linked (GlcNAc...) asparagine" evidence="4">
    <location>
        <position position="429"/>
    </location>
</feature>
<reference evidence="10" key="1">
    <citation type="journal article" date="2001" name="Proc. Natl. Acad. Sci. U.S.A.">
        <title>Molecular characterization of a mannoprotein with homology to chitin deacetylases that stimulates T cell responses to Cryptococcus neoformans.</title>
        <authorList>
            <person name="Levitz S.M."/>
            <person name="Nong S."/>
            <person name="Mansour M.K."/>
            <person name="Huang C."/>
            <person name="Specht C.A."/>
        </authorList>
    </citation>
    <scope>NUCLEOTIDE SEQUENCE [MRNA]</scope>
    <scope>PROTEIN SEQUENCE OF 52-71</scope>
    <scope>SUBCELLULAR LOCATION</scope>
    <scope>GLYCOSYLATION</scope>
    <scope>BIOTECHNOLOGY</scope>
    <source>
        <strain>cap67</strain>
    </source>
</reference>
<reference key="2">
    <citation type="journal article" date="2005" name="Science">
        <title>The genome of the basidiomycetous yeast and human pathogen Cryptococcus neoformans.</title>
        <authorList>
            <person name="Loftus B.J."/>
            <person name="Fung E."/>
            <person name="Roncaglia P."/>
            <person name="Rowley D."/>
            <person name="Amedeo P."/>
            <person name="Bruno D."/>
            <person name="Vamathevan J."/>
            <person name="Miranda M."/>
            <person name="Anderson I.J."/>
            <person name="Fraser J.A."/>
            <person name="Allen J.E."/>
            <person name="Bosdet I.E."/>
            <person name="Brent M.R."/>
            <person name="Chiu R."/>
            <person name="Doering T.L."/>
            <person name="Donlin M.J."/>
            <person name="D'Souza C.A."/>
            <person name="Fox D.S."/>
            <person name="Grinberg V."/>
            <person name="Fu J."/>
            <person name="Fukushima M."/>
            <person name="Haas B.J."/>
            <person name="Huang J.C."/>
            <person name="Janbon G."/>
            <person name="Jones S.J.M."/>
            <person name="Koo H.L."/>
            <person name="Krzywinski M.I."/>
            <person name="Kwon-Chung K.J."/>
            <person name="Lengeler K.B."/>
            <person name="Maiti R."/>
            <person name="Marra M.A."/>
            <person name="Marra R.E."/>
            <person name="Mathewson C.A."/>
            <person name="Mitchell T.G."/>
            <person name="Pertea M."/>
            <person name="Riggs F.R."/>
            <person name="Salzberg S.L."/>
            <person name="Schein J.E."/>
            <person name="Shvartsbeyn A."/>
            <person name="Shin H."/>
            <person name="Shumway M."/>
            <person name="Specht C.A."/>
            <person name="Suh B.B."/>
            <person name="Tenney A."/>
            <person name="Utterback T.R."/>
            <person name="Wickes B.L."/>
            <person name="Wortman J.R."/>
            <person name="Wye N.H."/>
            <person name="Kronstad J.W."/>
            <person name="Lodge J.K."/>
            <person name="Heitman J."/>
            <person name="Davis R.W."/>
            <person name="Fraser C.M."/>
            <person name="Hyman R.W."/>
        </authorList>
    </citation>
    <scope>NUCLEOTIDE SEQUENCE [LARGE SCALE GENOMIC DNA]</scope>
    <source>
        <strain>B-3501A</strain>
    </source>
</reference>
<sequence>MIPSTAAAALLTLTAGVALAHPGCGGQEIGRRNVGGPMVYRRDVTDEASAAASTDVNTECTAYGYAPVTEIASSFPTIWETASILSNDTEGQQLFATINSTLNTKLPNDVPHGTPTGDWTGVNYNSSDPDCWWTHNKCTTPASDTGLEADITIVPEPMTWGLGFDDGPNCSHNALYNLLSENNQKATMFFIGSNVMDWPLQAMRAHDEGHQICVHTWSHQYMTALSNEVVFAELYYTQKAIKAVLGVTPQCWRPPYGDVDNRVRMIAQALNLTTIIWSDDTDDWAAGTDGVTEQDVTDNYQAVIDKAGNGTYTTHGPVVLNHELTNYTMSVFMTMFPKIKSAFSYIVPMCTAYNITQPYLESNVTCPNFETYISGVTNISSSTTQKDGSSSTNTSSSGSGSAAGSASATSSSDDSSSSGSASASSSSSNASSGALGMFDGLSGVGLVLSGVVAGVMLL</sequence>
<dbReference type="EC" id="3.5.1.41" evidence="1"/>
<dbReference type="EMBL" id="AF361369">
    <property type="protein sequence ID" value="AAK50770.1"/>
    <property type="molecule type" value="mRNA"/>
</dbReference>
<dbReference type="EMBL" id="AAEY01000020">
    <property type="protein sequence ID" value="EAL21229.1"/>
    <property type="molecule type" value="Genomic_DNA"/>
</dbReference>
<dbReference type="RefSeq" id="XP_775876.1">
    <property type="nucleotide sequence ID" value="XM_770783.1"/>
</dbReference>
<dbReference type="SMR" id="Q55U20"/>
<dbReference type="GlyCosmos" id="Q55U20">
    <property type="glycosylation" value="12 sites, No reported glycans"/>
</dbReference>
<dbReference type="GeneID" id="4935673"/>
<dbReference type="KEGG" id="cnb:CNBD2840"/>
<dbReference type="VEuPathDB" id="FungiDB:CNBD2840"/>
<dbReference type="HOGENOM" id="CLU_035539_0_0_1"/>
<dbReference type="OrthoDB" id="5077at5206"/>
<dbReference type="GO" id="GO:0005576">
    <property type="term" value="C:extracellular region"/>
    <property type="evidence" value="ECO:0007669"/>
    <property type="project" value="UniProtKB-SubCell"/>
</dbReference>
<dbReference type="GO" id="GO:0005886">
    <property type="term" value="C:plasma membrane"/>
    <property type="evidence" value="ECO:0007669"/>
    <property type="project" value="UniProtKB-SubCell"/>
</dbReference>
<dbReference type="GO" id="GO:0098552">
    <property type="term" value="C:side of membrane"/>
    <property type="evidence" value="ECO:0007669"/>
    <property type="project" value="UniProtKB-KW"/>
</dbReference>
<dbReference type="GO" id="GO:0004099">
    <property type="term" value="F:chitin deacetylase activity"/>
    <property type="evidence" value="ECO:0007669"/>
    <property type="project" value="UniProtKB-EC"/>
</dbReference>
<dbReference type="GO" id="GO:0046872">
    <property type="term" value="F:metal ion binding"/>
    <property type="evidence" value="ECO:0007669"/>
    <property type="project" value="UniProtKB-KW"/>
</dbReference>
<dbReference type="GO" id="GO:0071555">
    <property type="term" value="P:cell wall organization"/>
    <property type="evidence" value="ECO:0007669"/>
    <property type="project" value="UniProtKB-KW"/>
</dbReference>
<dbReference type="GO" id="GO:0006032">
    <property type="term" value="P:chitin catabolic process"/>
    <property type="evidence" value="ECO:0007669"/>
    <property type="project" value="UniProtKB-KW"/>
</dbReference>
<dbReference type="GO" id="GO:0009272">
    <property type="term" value="P:fungal-type cell wall biogenesis"/>
    <property type="evidence" value="ECO:0007669"/>
    <property type="project" value="UniProtKB-ARBA"/>
</dbReference>
<dbReference type="GO" id="GO:0000272">
    <property type="term" value="P:polysaccharide catabolic process"/>
    <property type="evidence" value="ECO:0007669"/>
    <property type="project" value="UniProtKB-KW"/>
</dbReference>
<dbReference type="CDD" id="cd10952">
    <property type="entry name" value="CE4_MrCDA_like"/>
    <property type="match status" value="1"/>
</dbReference>
<dbReference type="FunFam" id="3.20.20.370:FF:000004">
    <property type="entry name" value="Related to Chitin deacetylase"/>
    <property type="match status" value="1"/>
</dbReference>
<dbReference type="Gene3D" id="3.20.20.370">
    <property type="entry name" value="Glycoside hydrolase/deacetylase"/>
    <property type="match status" value="1"/>
</dbReference>
<dbReference type="InterPro" id="IPR011330">
    <property type="entry name" value="Glyco_hydro/deAcase_b/a-brl"/>
</dbReference>
<dbReference type="InterPro" id="IPR002509">
    <property type="entry name" value="NODB_dom"/>
</dbReference>
<dbReference type="InterPro" id="IPR050248">
    <property type="entry name" value="Polysacc_deacetylase_ArnD"/>
</dbReference>
<dbReference type="PANTHER" id="PTHR10587:SF98">
    <property type="entry name" value="CHITIN DEACETYLASE"/>
    <property type="match status" value="1"/>
</dbReference>
<dbReference type="PANTHER" id="PTHR10587">
    <property type="entry name" value="GLYCOSYL TRANSFERASE-RELATED"/>
    <property type="match status" value="1"/>
</dbReference>
<dbReference type="Pfam" id="PF01522">
    <property type="entry name" value="Polysacc_deac_1"/>
    <property type="match status" value="1"/>
</dbReference>
<dbReference type="SUPFAM" id="SSF88713">
    <property type="entry name" value="Glycoside hydrolase/deacetylase"/>
    <property type="match status" value="1"/>
</dbReference>
<dbReference type="PROSITE" id="PS51677">
    <property type="entry name" value="NODB"/>
    <property type="match status" value="1"/>
</dbReference>
<keyword id="KW-0119">Carbohydrate metabolism</keyword>
<keyword id="KW-1003">Cell membrane</keyword>
<keyword id="KW-0134">Cell wall</keyword>
<keyword id="KW-0961">Cell wall biogenesis/degradation</keyword>
<keyword id="KW-0146">Chitin degradation</keyword>
<keyword id="KW-0170">Cobalt</keyword>
<keyword id="KW-0903">Direct protein sequencing</keyword>
<keyword id="KW-0325">Glycoprotein</keyword>
<keyword id="KW-0336">GPI-anchor</keyword>
<keyword id="KW-0378">Hydrolase</keyword>
<keyword id="KW-0449">Lipoprotein</keyword>
<keyword id="KW-0472">Membrane</keyword>
<keyword id="KW-0479">Metal-binding</keyword>
<keyword id="KW-0624">Polysaccharide degradation</keyword>
<keyword id="KW-0964">Secreted</keyword>
<keyword id="KW-0732">Signal</keyword>